<dbReference type="EC" id="3.6.4.-" evidence="1"/>
<dbReference type="EMBL" id="CP001083">
    <property type="protein sequence ID" value="ACQ55120.1"/>
    <property type="molecule type" value="Genomic_DNA"/>
</dbReference>
<dbReference type="RefSeq" id="WP_003357950.1">
    <property type="nucleotide sequence ID" value="NC_012658.1"/>
</dbReference>
<dbReference type="SMR" id="C3KTD2"/>
<dbReference type="KEGG" id="cbi:CLJ_B3335"/>
<dbReference type="HOGENOM" id="CLU_055599_1_0_9"/>
<dbReference type="Proteomes" id="UP000002333">
    <property type="component" value="Chromosome"/>
</dbReference>
<dbReference type="GO" id="GO:0005737">
    <property type="term" value="C:cytoplasm"/>
    <property type="evidence" value="ECO:0007669"/>
    <property type="project" value="UniProtKB-SubCell"/>
</dbReference>
<dbReference type="GO" id="GO:0048476">
    <property type="term" value="C:Holliday junction resolvase complex"/>
    <property type="evidence" value="ECO:0007669"/>
    <property type="project" value="UniProtKB-UniRule"/>
</dbReference>
<dbReference type="GO" id="GO:0005524">
    <property type="term" value="F:ATP binding"/>
    <property type="evidence" value="ECO:0007669"/>
    <property type="project" value="UniProtKB-UniRule"/>
</dbReference>
<dbReference type="GO" id="GO:0016887">
    <property type="term" value="F:ATP hydrolysis activity"/>
    <property type="evidence" value="ECO:0007669"/>
    <property type="project" value="InterPro"/>
</dbReference>
<dbReference type="GO" id="GO:0000400">
    <property type="term" value="F:four-way junction DNA binding"/>
    <property type="evidence" value="ECO:0007669"/>
    <property type="project" value="UniProtKB-UniRule"/>
</dbReference>
<dbReference type="GO" id="GO:0009378">
    <property type="term" value="F:four-way junction helicase activity"/>
    <property type="evidence" value="ECO:0007669"/>
    <property type="project" value="InterPro"/>
</dbReference>
<dbReference type="GO" id="GO:0006310">
    <property type="term" value="P:DNA recombination"/>
    <property type="evidence" value="ECO:0007669"/>
    <property type="project" value="UniProtKB-UniRule"/>
</dbReference>
<dbReference type="GO" id="GO:0006281">
    <property type="term" value="P:DNA repair"/>
    <property type="evidence" value="ECO:0007669"/>
    <property type="project" value="UniProtKB-UniRule"/>
</dbReference>
<dbReference type="CDD" id="cd00009">
    <property type="entry name" value="AAA"/>
    <property type="match status" value="1"/>
</dbReference>
<dbReference type="Gene3D" id="1.10.8.60">
    <property type="match status" value="1"/>
</dbReference>
<dbReference type="Gene3D" id="3.40.50.300">
    <property type="entry name" value="P-loop containing nucleotide triphosphate hydrolases"/>
    <property type="match status" value="1"/>
</dbReference>
<dbReference type="Gene3D" id="1.10.10.10">
    <property type="entry name" value="Winged helix-like DNA-binding domain superfamily/Winged helix DNA-binding domain"/>
    <property type="match status" value="1"/>
</dbReference>
<dbReference type="HAMAP" id="MF_00016">
    <property type="entry name" value="DNA_HJ_migration_RuvB"/>
    <property type="match status" value="1"/>
</dbReference>
<dbReference type="InterPro" id="IPR003593">
    <property type="entry name" value="AAA+_ATPase"/>
</dbReference>
<dbReference type="InterPro" id="IPR041445">
    <property type="entry name" value="AAA_lid_4"/>
</dbReference>
<dbReference type="InterPro" id="IPR004605">
    <property type="entry name" value="DNA_helicase_Holl-junc_RuvB"/>
</dbReference>
<dbReference type="InterPro" id="IPR027417">
    <property type="entry name" value="P-loop_NTPase"/>
</dbReference>
<dbReference type="InterPro" id="IPR008824">
    <property type="entry name" value="RuvB-like_N"/>
</dbReference>
<dbReference type="InterPro" id="IPR008823">
    <property type="entry name" value="RuvB_C"/>
</dbReference>
<dbReference type="InterPro" id="IPR036388">
    <property type="entry name" value="WH-like_DNA-bd_sf"/>
</dbReference>
<dbReference type="InterPro" id="IPR036390">
    <property type="entry name" value="WH_DNA-bd_sf"/>
</dbReference>
<dbReference type="NCBIfam" id="NF000868">
    <property type="entry name" value="PRK00080.1"/>
    <property type="match status" value="1"/>
</dbReference>
<dbReference type="NCBIfam" id="TIGR00635">
    <property type="entry name" value="ruvB"/>
    <property type="match status" value="1"/>
</dbReference>
<dbReference type="PANTHER" id="PTHR42848">
    <property type="match status" value="1"/>
</dbReference>
<dbReference type="PANTHER" id="PTHR42848:SF1">
    <property type="entry name" value="HOLLIDAY JUNCTION BRANCH MIGRATION COMPLEX SUBUNIT RUVB"/>
    <property type="match status" value="1"/>
</dbReference>
<dbReference type="Pfam" id="PF17864">
    <property type="entry name" value="AAA_lid_4"/>
    <property type="match status" value="1"/>
</dbReference>
<dbReference type="Pfam" id="PF05491">
    <property type="entry name" value="RuvB_C"/>
    <property type="match status" value="1"/>
</dbReference>
<dbReference type="Pfam" id="PF05496">
    <property type="entry name" value="RuvB_N"/>
    <property type="match status" value="1"/>
</dbReference>
<dbReference type="SMART" id="SM00382">
    <property type="entry name" value="AAA"/>
    <property type="match status" value="1"/>
</dbReference>
<dbReference type="SUPFAM" id="SSF52540">
    <property type="entry name" value="P-loop containing nucleoside triphosphate hydrolases"/>
    <property type="match status" value="1"/>
</dbReference>
<dbReference type="SUPFAM" id="SSF46785">
    <property type="entry name" value="Winged helix' DNA-binding domain"/>
    <property type="match status" value="1"/>
</dbReference>
<organism>
    <name type="scientific">Clostridium botulinum (strain 657 / Type Ba4)</name>
    <dbReference type="NCBI Taxonomy" id="515621"/>
    <lineage>
        <taxon>Bacteria</taxon>
        <taxon>Bacillati</taxon>
        <taxon>Bacillota</taxon>
        <taxon>Clostridia</taxon>
        <taxon>Eubacteriales</taxon>
        <taxon>Clostridiaceae</taxon>
        <taxon>Clostridium</taxon>
    </lineage>
</organism>
<evidence type="ECO:0000255" key="1">
    <source>
        <dbReference type="HAMAP-Rule" id="MF_00016"/>
    </source>
</evidence>
<feature type="chain" id="PRO_1000201830" description="Holliday junction branch migration complex subunit RuvB">
    <location>
        <begin position="1"/>
        <end position="342"/>
    </location>
</feature>
<feature type="region of interest" description="Large ATPase domain (RuvB-L)" evidence="1">
    <location>
        <begin position="1"/>
        <end position="181"/>
    </location>
</feature>
<feature type="region of interest" description="Small ATPAse domain (RuvB-S)" evidence="1">
    <location>
        <begin position="182"/>
        <end position="252"/>
    </location>
</feature>
<feature type="region of interest" description="Head domain (RuvB-H)" evidence="1">
    <location>
        <begin position="255"/>
        <end position="342"/>
    </location>
</feature>
<feature type="binding site" evidence="1">
    <location>
        <position position="20"/>
    </location>
    <ligand>
        <name>ATP</name>
        <dbReference type="ChEBI" id="CHEBI:30616"/>
    </ligand>
</feature>
<feature type="binding site" evidence="1">
    <location>
        <position position="21"/>
    </location>
    <ligand>
        <name>ATP</name>
        <dbReference type="ChEBI" id="CHEBI:30616"/>
    </ligand>
</feature>
<feature type="binding site" evidence="1">
    <location>
        <position position="62"/>
    </location>
    <ligand>
        <name>ATP</name>
        <dbReference type="ChEBI" id="CHEBI:30616"/>
    </ligand>
</feature>
<feature type="binding site" evidence="1">
    <location>
        <position position="65"/>
    </location>
    <ligand>
        <name>ATP</name>
        <dbReference type="ChEBI" id="CHEBI:30616"/>
    </ligand>
</feature>
<feature type="binding site" evidence="1">
    <location>
        <position position="66"/>
    </location>
    <ligand>
        <name>ATP</name>
        <dbReference type="ChEBI" id="CHEBI:30616"/>
    </ligand>
</feature>
<feature type="binding site" evidence="1">
    <location>
        <position position="66"/>
    </location>
    <ligand>
        <name>Mg(2+)</name>
        <dbReference type="ChEBI" id="CHEBI:18420"/>
    </ligand>
</feature>
<feature type="binding site" evidence="1">
    <location>
        <position position="67"/>
    </location>
    <ligand>
        <name>ATP</name>
        <dbReference type="ChEBI" id="CHEBI:30616"/>
    </ligand>
</feature>
<feature type="binding site" evidence="1">
    <location>
        <begin position="128"/>
        <end position="130"/>
    </location>
    <ligand>
        <name>ATP</name>
        <dbReference type="ChEBI" id="CHEBI:30616"/>
    </ligand>
</feature>
<feature type="binding site" evidence="1">
    <location>
        <position position="171"/>
    </location>
    <ligand>
        <name>ATP</name>
        <dbReference type="ChEBI" id="CHEBI:30616"/>
    </ligand>
</feature>
<feature type="binding site" evidence="1">
    <location>
        <position position="181"/>
    </location>
    <ligand>
        <name>ATP</name>
        <dbReference type="ChEBI" id="CHEBI:30616"/>
    </ligand>
</feature>
<feature type="binding site" evidence="1">
    <location>
        <position position="218"/>
    </location>
    <ligand>
        <name>ATP</name>
        <dbReference type="ChEBI" id="CHEBI:30616"/>
    </ligand>
</feature>
<feature type="binding site" evidence="1">
    <location>
        <position position="310"/>
    </location>
    <ligand>
        <name>DNA</name>
        <dbReference type="ChEBI" id="CHEBI:16991"/>
    </ligand>
</feature>
<feature type="binding site" evidence="1">
    <location>
        <position position="315"/>
    </location>
    <ligand>
        <name>DNA</name>
        <dbReference type="ChEBI" id="CHEBI:16991"/>
    </ligand>
</feature>
<proteinExistence type="inferred from homology"/>
<accession>C3KTD2</accession>
<name>RUVB_CLOB6</name>
<gene>
    <name evidence="1" type="primary">ruvB</name>
    <name type="ordered locus">CLJ_B3335</name>
</gene>
<comment type="function">
    <text evidence="1">The RuvA-RuvB-RuvC complex processes Holliday junction (HJ) DNA during genetic recombination and DNA repair, while the RuvA-RuvB complex plays an important role in the rescue of blocked DNA replication forks via replication fork reversal (RFR). RuvA specifically binds to HJ cruciform DNA, conferring on it an open structure. The RuvB hexamer acts as an ATP-dependent pump, pulling dsDNA into and through the RuvAB complex. RuvB forms 2 homohexamers on either side of HJ DNA bound by 1 or 2 RuvA tetramers; 4 subunits per hexamer contact DNA at a time. Coordinated motions by a converter formed by DNA-disengaged RuvB subunits stimulates ATP hydrolysis and nucleotide exchange. Immobilization of the converter enables RuvB to convert the ATP-contained energy into a lever motion, pulling 2 nucleotides of DNA out of the RuvA tetramer per ATP hydrolyzed, thus driving DNA branch migration. The RuvB motors rotate together with the DNA substrate, which together with the progressing nucleotide cycle form the mechanistic basis for DNA recombination by continuous HJ branch migration. Branch migration allows RuvC to scan DNA until it finds its consensus sequence, where it cleaves and resolves cruciform DNA.</text>
</comment>
<comment type="catalytic activity">
    <reaction evidence="1">
        <text>ATP + H2O = ADP + phosphate + H(+)</text>
        <dbReference type="Rhea" id="RHEA:13065"/>
        <dbReference type="ChEBI" id="CHEBI:15377"/>
        <dbReference type="ChEBI" id="CHEBI:15378"/>
        <dbReference type="ChEBI" id="CHEBI:30616"/>
        <dbReference type="ChEBI" id="CHEBI:43474"/>
        <dbReference type="ChEBI" id="CHEBI:456216"/>
    </reaction>
</comment>
<comment type="subunit">
    <text evidence="1">Homohexamer. Forms an RuvA(8)-RuvB(12)-Holliday junction (HJ) complex. HJ DNA is sandwiched between 2 RuvA tetramers; dsDNA enters through RuvA and exits via RuvB. An RuvB hexamer assembles on each DNA strand where it exits the tetramer. Each RuvB hexamer is contacted by two RuvA subunits (via domain III) on 2 adjacent RuvB subunits; this complex drives branch migration. In the full resolvosome a probable DNA-RuvA(4)-RuvB(12)-RuvC(2) complex forms which resolves the HJ.</text>
</comment>
<comment type="subcellular location">
    <subcellularLocation>
        <location evidence="1">Cytoplasm</location>
    </subcellularLocation>
</comment>
<comment type="domain">
    <text evidence="1">Has 3 domains, the large (RuvB-L) and small ATPase (RuvB-S) domains and the C-terminal head (RuvB-H) domain. The head domain binds DNA, while the ATPase domains jointly bind ATP, ADP or are empty depending on the state of the subunit in the translocation cycle. During a single DNA translocation step the structure of each domain remains the same, but their relative positions change.</text>
</comment>
<comment type="similarity">
    <text evidence="1">Belongs to the RuvB family.</text>
</comment>
<protein>
    <recommendedName>
        <fullName evidence="1">Holliday junction branch migration complex subunit RuvB</fullName>
        <ecNumber evidence="1">3.6.4.-</ecNumber>
    </recommendedName>
</protein>
<sequence length="342" mass="38373">MENRMVTPFDVEDDREQYSLRPTTLKEYIGQKKVKANLDIFIKAAKKRSESLDHVLFYGPPGLGKTTLANIIANEMTGNLKVTSGPAIEKAGDLAAILTSLTDYDVLFIDEIHRLNRSIEEILYPAMEDYALDIVIGKGAAAKSIRLDLPKFTLIGATTRVGLLTSPLRDRFGMLCAMEFYTDEELMEIVVRSAAILNVNICREAAFEIGKRSRGTPRIANRLLKRVRDYCDVKHDGDIDLQGAKAALDLLEVDKEGLDKIDNKILEAIIFNFKGGPVGLETLAYFIGEELDTIEDVYEPYLIQKGFIMRTPRGRVASEKAYNHFGVTKKEEKDNQVSIFNK</sequence>
<keyword id="KW-0067">ATP-binding</keyword>
<keyword id="KW-0963">Cytoplasm</keyword>
<keyword id="KW-0227">DNA damage</keyword>
<keyword id="KW-0233">DNA recombination</keyword>
<keyword id="KW-0234">DNA repair</keyword>
<keyword id="KW-0238">DNA-binding</keyword>
<keyword id="KW-0378">Hydrolase</keyword>
<keyword id="KW-0547">Nucleotide-binding</keyword>
<reference key="1">
    <citation type="submission" date="2008-05" db="EMBL/GenBank/DDBJ databases">
        <title>Genome sequence of Clostridium botulinum Ba4 strain 657.</title>
        <authorList>
            <person name="Shrivastava S."/>
            <person name="Brown J.L."/>
            <person name="Bruce D."/>
            <person name="Detter C."/>
            <person name="Munk C."/>
            <person name="Smith L.A."/>
            <person name="Smith T.J."/>
            <person name="Sutton G."/>
            <person name="Brettin T.S."/>
        </authorList>
    </citation>
    <scope>NUCLEOTIDE SEQUENCE [LARGE SCALE GENOMIC DNA]</scope>
    <source>
        <strain>657 / Type Ba4</strain>
    </source>
</reference>